<proteinExistence type="evidence at protein level"/>
<comment type="function">
    <text evidence="3 4 5">Oligosaccharyl transferase (OST) that catalyzes the initial transfer of a defined glycan (a glucose-linked heptasaccharide composed of 3 Glc, 2 Man, 2 Gal and a sulfate for A.fulgidus AglB-L) from the lipid carrier dolichol-monophosphate to an asparagine residue within an Asn-X-Ser/Thr consensus motif in nascent polypeptide chains, the first step in protein N-glycosylation.</text>
</comment>
<comment type="catalytic activity">
    <reaction evidence="3 5">
        <text>an archaeal dolichyl phosphooligosaccharide + [protein]-L-asparagine = an archaeal dolichyl phosphate + a glycoprotein with the oligosaccharide chain attached by N-beta-D-glycosyl linkage to a protein L-asparagine.</text>
        <dbReference type="EC" id="2.4.99.21"/>
    </reaction>
</comment>
<comment type="cofactor">
    <cofactor evidence="3">
        <name>Mg(2+)</name>
        <dbReference type="ChEBI" id="CHEBI:18420"/>
    </cofactor>
    <cofactor evidence="3">
        <name>Mn(2+)</name>
        <dbReference type="ChEBI" id="CHEBI:29035"/>
    </cofactor>
    <cofactor evidence="3">
        <name>Zn(2+)</name>
        <dbReference type="ChEBI" id="CHEBI:29105"/>
    </cofactor>
</comment>
<comment type="pathway">
    <text evidence="8">Protein modification; protein glycosylation.</text>
</comment>
<comment type="subcellular location">
    <subcellularLocation>
        <location evidence="2">Cell membrane</location>
        <topology evidence="3">Multi-pass membrane protein</topology>
    </subcellularLocation>
</comment>
<comment type="domain">
    <text evidence="8">Despite low primary sequence conservation between eukaryotic catalytic subunits and bacterial and archaeal single subunit OSTs (ssOST), structural comparison revealed several common motifs at spatially equivalent positions, like the DXD motif 1 on the external loop 1 and the DXD motif 2 on the external loop 2 involved in binding of the metal ion cofactor and the carboxamide group of the acceptor asparagine, the conserved Glu residue of the TIXE/SVSE motif on the external loop 5 involved in catalysis, as well as the WWDYG and the DK/MI motifs in the globular domain that define the binding pocket for the +2 Ser/Thr of the acceptor sequon. In bacterial ssOSTs, an Arg residue was found to interact with a negatively charged side chain at the -2 position of the sequon. This Arg is conserved in bacterial enzymes and correlates with an extended sequon requirement (Asp-X-Asn-X-Ser/Thr) for bacterial N-glycosylation.</text>
</comment>
<comment type="similarity">
    <text evidence="6">Belongs to the STT3 family.</text>
</comment>
<gene>
    <name type="primary">aglB3</name>
    <name type="ordered locus">AF_0380</name>
</gene>
<name>AGLB3_ARCFU</name>
<dbReference type="EC" id="2.4.99.21" evidence="3 5"/>
<dbReference type="EMBL" id="AE000782">
    <property type="protein sequence ID" value="AAB90856.1"/>
    <property type="molecule type" value="Genomic_DNA"/>
</dbReference>
<dbReference type="PIR" id="D69297">
    <property type="entry name" value="D69297"/>
</dbReference>
<dbReference type="RefSeq" id="WP_010877887.1">
    <property type="nucleotide sequence ID" value="NC_000917.1"/>
</dbReference>
<dbReference type="PDB" id="3WAI">
    <property type="method" value="X-ray"/>
    <property type="resolution" value="1.90 A"/>
    <property type="chains" value="A=500-868"/>
</dbReference>
<dbReference type="PDB" id="3WAJ">
    <property type="method" value="X-ray"/>
    <property type="resolution" value="2.50 A"/>
    <property type="chains" value="A=1-868"/>
</dbReference>
<dbReference type="PDB" id="3WAK">
    <property type="method" value="X-ray"/>
    <property type="resolution" value="3.41 A"/>
    <property type="chains" value="A=1-868"/>
</dbReference>
<dbReference type="PDB" id="5GMY">
    <property type="method" value="X-ray"/>
    <property type="resolution" value="3.50 A"/>
    <property type="chains" value="A=1-868"/>
</dbReference>
<dbReference type="PDB" id="7E9S">
    <property type="method" value="X-ray"/>
    <property type="resolution" value="2.70 A"/>
    <property type="chains" value="A=1-868"/>
</dbReference>
<dbReference type="PDBsum" id="3WAI"/>
<dbReference type="PDBsum" id="3WAJ"/>
<dbReference type="PDBsum" id="3WAK"/>
<dbReference type="PDBsum" id="5GMY"/>
<dbReference type="PDBsum" id="7E9S"/>
<dbReference type="SMR" id="O29867"/>
<dbReference type="STRING" id="224325.AF_0380"/>
<dbReference type="CAZy" id="GT66">
    <property type="family name" value="Glycosyltransferase Family 66"/>
</dbReference>
<dbReference type="PaxDb" id="224325-AF_0380"/>
<dbReference type="EnsemblBacteria" id="AAB90856">
    <property type="protein sequence ID" value="AAB90856"/>
    <property type="gene ID" value="AF_0380"/>
</dbReference>
<dbReference type="GeneID" id="24793919"/>
<dbReference type="KEGG" id="afu:AF_0380"/>
<dbReference type="eggNOG" id="arCOG02043">
    <property type="taxonomic scope" value="Archaea"/>
</dbReference>
<dbReference type="HOGENOM" id="CLU_008803_0_0_2"/>
<dbReference type="OrthoDB" id="82393at2157"/>
<dbReference type="PhylomeDB" id="O29867"/>
<dbReference type="BRENDA" id="2.4.99.18">
    <property type="organism ID" value="414"/>
</dbReference>
<dbReference type="BRENDA" id="2.4.99.21">
    <property type="organism ID" value="414"/>
</dbReference>
<dbReference type="UniPathway" id="UPA00378"/>
<dbReference type="EvolutionaryTrace" id="O29867"/>
<dbReference type="Proteomes" id="UP000002199">
    <property type="component" value="Chromosome"/>
</dbReference>
<dbReference type="GO" id="GO:0005886">
    <property type="term" value="C:plasma membrane"/>
    <property type="evidence" value="ECO:0007669"/>
    <property type="project" value="UniProtKB-SubCell"/>
</dbReference>
<dbReference type="GO" id="GO:0046872">
    <property type="term" value="F:metal ion binding"/>
    <property type="evidence" value="ECO:0007669"/>
    <property type="project" value="UniProtKB-KW"/>
</dbReference>
<dbReference type="GO" id="GO:0004576">
    <property type="term" value="F:oligosaccharyl transferase activity"/>
    <property type="evidence" value="ECO:0007669"/>
    <property type="project" value="InterPro"/>
</dbReference>
<dbReference type="GO" id="GO:0006486">
    <property type="term" value="P:protein glycosylation"/>
    <property type="evidence" value="ECO:0007669"/>
    <property type="project" value="UniProtKB-UniPathway"/>
</dbReference>
<dbReference type="DisProt" id="DP01200"/>
<dbReference type="Gene3D" id="1.20.58.1650">
    <property type="match status" value="1"/>
</dbReference>
<dbReference type="Gene3D" id="2.60.40.3390">
    <property type="match status" value="1"/>
</dbReference>
<dbReference type="Gene3D" id="3.40.50.12610">
    <property type="match status" value="1"/>
</dbReference>
<dbReference type="InterPro" id="IPR054479">
    <property type="entry name" value="AglB-like_core"/>
</dbReference>
<dbReference type="InterPro" id="IPR041154">
    <property type="entry name" value="AglB_P1"/>
</dbReference>
<dbReference type="InterPro" id="IPR003674">
    <property type="entry name" value="Oligo_trans_STT3"/>
</dbReference>
<dbReference type="InterPro" id="IPR026410">
    <property type="entry name" value="OlisacTrfase_arch"/>
</dbReference>
<dbReference type="InterPro" id="IPR048307">
    <property type="entry name" value="STT3_N"/>
</dbReference>
<dbReference type="NCBIfam" id="TIGR04154">
    <property type="entry name" value="archaeo_STT3"/>
    <property type="match status" value="1"/>
</dbReference>
<dbReference type="PANTHER" id="PTHR13872">
    <property type="entry name" value="DOLICHYL-DIPHOSPHOOLIGOSACCHARIDE--PROTEIN GLYCOSYLTRANSFERASE SUBUNIT"/>
    <property type="match status" value="1"/>
</dbReference>
<dbReference type="PANTHER" id="PTHR13872:SF1">
    <property type="entry name" value="DOLICHYL-DIPHOSPHOOLIGOSACCHARIDE--PROTEIN GLYCOSYLTRANSFERASE SUBUNIT STT3B"/>
    <property type="match status" value="1"/>
</dbReference>
<dbReference type="Pfam" id="PF22627">
    <property type="entry name" value="AglB_core-like"/>
    <property type="match status" value="1"/>
</dbReference>
<dbReference type="Pfam" id="PF18079">
    <property type="entry name" value="AglB_L1"/>
    <property type="match status" value="1"/>
</dbReference>
<dbReference type="Pfam" id="PF02516">
    <property type="entry name" value="STT3"/>
    <property type="match status" value="1"/>
</dbReference>
<protein>
    <recommendedName>
        <fullName>Dolichyl-phosphooligosaccharide-protein glycotransferase 3</fullName>
        <ecNumber evidence="3 5">2.4.99.21</ecNumber>
    </recommendedName>
    <alternativeName>
        <fullName>Archaeal glycosylation protein B</fullName>
        <shortName>AglB-L</shortName>
        <shortName>AglB-Long</shortName>
    </alternativeName>
    <alternativeName>
        <fullName>Oligosaccharyl transferase</fullName>
        <shortName>OST</shortName>
        <shortName>OTase</shortName>
    </alternativeName>
</protein>
<evidence type="ECO:0000250" key="1">
    <source>
        <dbReference type="UniProtKB" id="B9KDD4"/>
    </source>
</evidence>
<evidence type="ECO:0000250" key="2">
    <source>
        <dbReference type="UniProtKB" id="Q2EMT4"/>
    </source>
</evidence>
<evidence type="ECO:0000269" key="3">
    <source>
    </source>
</evidence>
<evidence type="ECO:0000269" key="4">
    <source>
    </source>
</evidence>
<evidence type="ECO:0000269" key="5">
    <source>
    </source>
</evidence>
<evidence type="ECO:0000305" key="6"/>
<evidence type="ECO:0000305" key="7">
    <source>
    </source>
</evidence>
<evidence type="ECO:0000305" key="8">
    <source>
    </source>
</evidence>
<evidence type="ECO:0007744" key="9">
    <source>
        <dbReference type="PDB" id="3WAI"/>
    </source>
</evidence>
<evidence type="ECO:0007744" key="10">
    <source>
        <dbReference type="PDB" id="3WAJ"/>
    </source>
</evidence>
<evidence type="ECO:0007744" key="11">
    <source>
        <dbReference type="PDB" id="3WAK"/>
    </source>
</evidence>
<evidence type="ECO:0007744" key="12">
    <source>
        <dbReference type="PDB" id="5GMY"/>
    </source>
</evidence>
<evidence type="ECO:0007829" key="13">
    <source>
        <dbReference type="PDB" id="3WAI"/>
    </source>
</evidence>
<evidence type="ECO:0007829" key="14">
    <source>
        <dbReference type="PDB" id="3WAJ"/>
    </source>
</evidence>
<evidence type="ECO:0007829" key="15">
    <source>
        <dbReference type="PDB" id="3WAK"/>
    </source>
</evidence>
<evidence type="ECO:0007829" key="16">
    <source>
        <dbReference type="PDB" id="5GMY"/>
    </source>
</evidence>
<evidence type="ECO:0007829" key="17">
    <source>
        <dbReference type="PDB" id="7E9S"/>
    </source>
</evidence>
<organism>
    <name type="scientific">Archaeoglobus fulgidus (strain ATCC 49558 / DSM 4304 / JCM 9628 / NBRC 100126 / VC-16)</name>
    <dbReference type="NCBI Taxonomy" id="224325"/>
    <lineage>
        <taxon>Archaea</taxon>
        <taxon>Methanobacteriati</taxon>
        <taxon>Methanobacteriota</taxon>
        <taxon>Archaeoglobi</taxon>
        <taxon>Archaeoglobales</taxon>
        <taxon>Archaeoglobaceae</taxon>
        <taxon>Archaeoglobus</taxon>
    </lineage>
</organism>
<sequence length="868" mass="98253">MQNAESWFKKYWHLSVLVIAALISVKLRILNPWNSVFTWTVRLGGNDPWYYYRLIENTIHNFPHRIWFDPFTYYPYGSYTHFGPFLVYLGSIAGIIFSATSGESLRAVLAFIPAIGGVLAILPVYLLTREVFDKRAAVIAAFLIAIVPGQFLQRSILGFNDHHIWEAFWQVSALGTFLLAYNRWKGHDLSHNLTARQMAYPVIAGITIGLYVLSWGAGFIIAPIILAFMFFAFVLAGFVNADRKNLSLVAVVTFAVSALIYLPFAFNYPGFSTIFYSPFQLLVLLGSAVIAAAFYQIEKWNDVGFFERVGLGRKGMPLAVIVLTALIMGLFFVISPDFARNLLSVVRVVQPKGGALTIAEVYPFFFTHNGEFTLTNAVLHFGALFFFGMAGILYSAYRFLKRRSFPEMALLIWAIAMFIALWGQNRFAYYFAAVSAVYSALALSVVFDKLHLYRALENAIGARNKLSYFRVAFALLIALAAIYPTYILADAQSSYAGGPNKQWYDALTWMRENTPDGEKYDEYYLQLYPTPQSNKEPFSYPFETYGVISWWDYGHWIEAVAHRMPIANPFQAGIGNKYNNVPGASSFFTAENESYAEFVAEKLNVKYVVSDIEMETGKYYAMAVWAEGDLPLAEKYYGGYFYYSPTGTFGYANSQWDIPLNSIIIPLRIPSELYYSTMEAKLHLFDGSGLSHYRMIYESDYPAEWKSYSSQVNLNNESQVLQTALYEAVMRARYGVSPTMGTQEVLYKYAYTQLYEKKMGIPVKIAPSGYVKIFERVKGAVVTGKVSANVTEVSVNATIKTNQNRTFEYWQTVEVKNGTYTVVLPYSHNSDYPVKPITPYHIKAGNVVKEITIYESQVQNGEIIQLDL</sequence>
<feature type="chain" id="PRO_0000445596" description="Dolichyl-phosphooligosaccharide-protein glycotransferase 3">
    <location>
        <begin position="1"/>
        <end position="868"/>
    </location>
</feature>
<feature type="topological domain" description="Cytoplasmic" evidence="8">
    <location>
        <begin position="1"/>
        <end position="16"/>
    </location>
</feature>
<feature type="transmembrane region" description="Helical" evidence="3">
    <location>
        <begin position="17"/>
        <end position="36"/>
    </location>
</feature>
<feature type="topological domain" description="Extracellular" evidence="8">
    <location>
        <begin position="37"/>
        <end position="101"/>
    </location>
</feature>
<feature type="transmembrane region" description="Helical" evidence="3">
    <location>
        <begin position="102"/>
        <end position="131"/>
    </location>
</feature>
<feature type="topological domain" description="Cytoplasmic" evidence="8">
    <location>
        <begin position="132"/>
        <end position="133"/>
    </location>
</feature>
<feature type="transmembrane region" description="Helical" evidence="3">
    <location>
        <begin position="134"/>
        <end position="153"/>
    </location>
</feature>
<feature type="topological domain" description="Extracellular" evidence="8">
    <location>
        <begin position="154"/>
        <end position="162"/>
    </location>
</feature>
<feature type="transmembrane region" description="Helical" evidence="3">
    <location>
        <begin position="163"/>
        <end position="184"/>
    </location>
</feature>
<feature type="topological domain" description="Cytoplasmic" evidence="8">
    <location>
        <begin position="185"/>
        <end position="199"/>
    </location>
</feature>
<feature type="transmembrane region" description="Helical" evidence="3">
    <location>
        <begin position="200"/>
        <end position="212"/>
    </location>
</feature>
<feature type="topological domain" description="Extracellular" evidence="8">
    <location>
        <begin position="213"/>
        <end position="215"/>
    </location>
</feature>
<feature type="transmembrane region" description="Helical" evidence="3">
    <location>
        <begin position="216"/>
        <end position="238"/>
    </location>
</feature>
<feature type="topological domain" description="Cytoplasmic" evidence="8">
    <location>
        <begin position="239"/>
        <end position="241"/>
    </location>
</feature>
<feature type="transmembrane region" description="Helical" evidence="3">
    <location>
        <begin position="242"/>
        <end position="262"/>
    </location>
</feature>
<feature type="topological domain" description="Extracellular" evidence="8">
    <location>
        <begin position="263"/>
        <end position="279"/>
    </location>
</feature>
<feature type="transmembrane region" description="Helical" evidence="3">
    <location>
        <begin position="280"/>
        <end position="303"/>
    </location>
</feature>
<feature type="topological domain" description="Cytoplasmic" evidence="8">
    <location>
        <begin position="304"/>
        <end position="312"/>
    </location>
</feature>
<feature type="transmembrane region" description="Helical" evidence="3">
    <location>
        <begin position="313"/>
        <end position="330"/>
    </location>
</feature>
<feature type="topological domain" description="Extracellular" evidence="8">
    <location>
        <begin position="331"/>
        <end position="373"/>
    </location>
</feature>
<feature type="transmembrane region" description="Helical" evidence="3">
    <location>
        <begin position="374"/>
        <end position="396"/>
    </location>
</feature>
<feature type="topological domain" description="Cytoplasmic" evidence="8">
    <location>
        <begin position="397"/>
        <end position="404"/>
    </location>
</feature>
<feature type="transmembrane region" description="Helical" evidence="3">
    <location>
        <begin position="405"/>
        <end position="423"/>
    </location>
</feature>
<feature type="topological domain" description="Extracellular" evidence="8">
    <location>
        <begin position="424"/>
        <end position="427"/>
    </location>
</feature>
<feature type="transmembrane region" description="Helical" evidence="3">
    <location>
        <begin position="428"/>
        <end position="452"/>
    </location>
</feature>
<feature type="topological domain" description="Cytoplasmic" evidence="8">
    <location>
        <begin position="453"/>
        <end position="468"/>
    </location>
</feature>
<feature type="transmembrane region" description="Helical" evidence="3">
    <location>
        <begin position="469"/>
        <end position="494"/>
    </location>
</feature>
<feature type="topological domain" description="Extracellular" evidence="8">
    <location>
        <begin position="495"/>
        <end position="868"/>
    </location>
</feature>
<feature type="region of interest" description="Interacts with target acceptor peptide in protein substrate" evidence="5">
    <location>
        <begin position="550"/>
        <end position="552"/>
    </location>
</feature>
<feature type="short sequence motif" description="DXD motif 1" evidence="8">
    <location>
        <begin position="45"/>
        <end position="47"/>
    </location>
</feature>
<feature type="short sequence motif" description="DXD motif 2" evidence="8">
    <location>
        <begin position="161"/>
        <end position="163"/>
    </location>
</feature>
<feature type="short sequence motif" description="TIXE motif" evidence="8">
    <location>
        <begin position="357"/>
        <end position="360"/>
    </location>
</feature>
<feature type="short sequence motif" description="WWDYG motif" evidence="7">
    <location>
        <begin position="550"/>
        <end position="554"/>
    </location>
</feature>
<feature type="short sequence motif" description="DKi motif" evidence="7">
    <location>
        <begin position="613"/>
        <end position="622"/>
    </location>
</feature>
<feature type="binding site" evidence="3 5 11">
    <location>
        <position position="47"/>
    </location>
    <ligand>
        <name>Mn(2+)</name>
        <dbReference type="ChEBI" id="CHEBI:29035"/>
    </ligand>
</feature>
<feature type="binding site" evidence="8">
    <location>
        <position position="81"/>
    </location>
    <ligand>
        <name>a glycophospholipid</name>
        <dbReference type="ChEBI" id="CHEBI:24397"/>
        <note>archaeal dolichyl phosphooligosaccharide</note>
    </ligand>
</feature>
<feature type="binding site" evidence="3 5 11">
    <location>
        <position position="161"/>
    </location>
    <ligand>
        <name>Mn(2+)</name>
        <dbReference type="ChEBI" id="CHEBI:29035"/>
    </ligand>
</feature>
<feature type="binding site" evidence="8">
    <location>
        <position position="162"/>
    </location>
    <ligand>
        <name>a glycophospholipid</name>
        <dbReference type="ChEBI" id="CHEBI:24397"/>
        <note>archaeal dolichyl phosphooligosaccharide</note>
    </ligand>
</feature>
<feature type="binding site" evidence="3 5 11">
    <location>
        <position position="163"/>
    </location>
    <ligand>
        <name>Mn(2+)</name>
        <dbReference type="ChEBI" id="CHEBI:29035"/>
    </ligand>
</feature>
<feature type="binding site" evidence="8">
    <location>
        <position position="426"/>
    </location>
    <ligand>
        <name>a glycophospholipid</name>
        <dbReference type="ChEBI" id="CHEBI:24397"/>
        <note>archaeal dolichyl phosphooligosaccharide</note>
    </ligand>
</feature>
<feature type="site" description="Interacts with target acceptor peptide in protein substrate" evidence="5">
    <location>
        <position position="47"/>
    </location>
</feature>
<feature type="site" description="Important for catalytic activity" evidence="1">
    <location>
        <position position="154"/>
    </location>
</feature>
<feature type="site" description="Interacts with target acceptor peptide in protein substrate" evidence="5">
    <location>
        <position position="360"/>
    </location>
</feature>
<feature type="site" description="Interacts with target acceptor peptide in protein substrate" evidence="5">
    <location>
        <position position="618"/>
    </location>
</feature>
<feature type="mutagenesis site" description="Complete loss of catalytic activity." evidence="3">
    <original>D</original>
    <variation>A</variation>
    <variation>N</variation>
    <location>
        <position position="47"/>
    </location>
</feature>
<feature type="mutagenesis site" description="Reduces catalytic activity by 80%." evidence="3">
    <original>D</original>
    <variation>E</variation>
    <location>
        <position position="47"/>
    </location>
</feature>
<feature type="mutagenesis site" description="Complete loss of catalytic activity." evidence="3">
    <original>H</original>
    <variation>E</variation>
    <location>
        <position position="81"/>
    </location>
</feature>
<feature type="mutagenesis site" description="Complete loss of catalytic activity." evidence="3">
    <original>D</original>
    <variation>A</variation>
    <location>
        <position position="161"/>
    </location>
</feature>
<feature type="mutagenesis site" description="Complete loss of catalytic activity." evidence="3">
    <original>H</original>
    <variation>E</variation>
    <location>
        <position position="162"/>
    </location>
</feature>
<feature type="mutagenesis site" description="Complete loss of catalytic activity." evidence="3">
    <original>H</original>
    <variation>A</variation>
    <variation>D</variation>
    <location>
        <position position="163"/>
    </location>
</feature>
<feature type="mutagenesis site" description="Complete loss of catalytic activity." evidence="3">
    <original>E</original>
    <variation>A</variation>
    <variation>N</variation>
    <location>
        <position position="360"/>
    </location>
</feature>
<feature type="mutagenesis site" description="Reduces catalytic activity by 70%." evidence="3">
    <original>E</original>
    <variation>Q</variation>
    <location>
        <position position="360"/>
    </location>
</feature>
<feature type="mutagenesis site" description="Complete loss of catalytic activity." evidence="3">
    <original>R</original>
    <variation>A</variation>
    <location>
        <position position="426"/>
    </location>
</feature>
<feature type="mutagenesis site" description="No effect." evidence="3">
    <original>R</original>
    <variation>K</variation>
    <location>
        <position position="426"/>
    </location>
</feature>
<feature type="turn" evidence="17">
    <location>
        <begin position="9"/>
        <end position="11"/>
    </location>
</feature>
<feature type="turn" evidence="14">
    <location>
        <begin position="16"/>
        <end position="18"/>
    </location>
</feature>
<feature type="helix" evidence="14">
    <location>
        <begin position="19"/>
        <end position="28"/>
    </location>
</feature>
<feature type="turn" evidence="14">
    <location>
        <begin position="29"/>
        <end position="32"/>
    </location>
</feature>
<feature type="helix" evidence="14">
    <location>
        <begin position="33"/>
        <end position="36"/>
    </location>
</feature>
<feature type="strand" evidence="14">
    <location>
        <begin position="37"/>
        <end position="41"/>
    </location>
</feature>
<feature type="helix" evidence="14">
    <location>
        <begin position="47"/>
        <end position="60"/>
    </location>
</feature>
<feature type="turn" evidence="14">
    <location>
        <begin position="61"/>
        <end position="63"/>
    </location>
</feature>
<feature type="strand" evidence="14">
    <location>
        <begin position="67"/>
        <end position="69"/>
    </location>
</feature>
<feature type="turn" evidence="14">
    <location>
        <begin position="73"/>
        <end position="76"/>
    </location>
</feature>
<feature type="helix" evidence="14">
    <location>
        <begin position="84"/>
        <end position="96"/>
    </location>
</feature>
<feature type="helix" evidence="14">
    <location>
        <begin position="102"/>
        <end position="118"/>
    </location>
</feature>
<feature type="helix" evidence="14">
    <location>
        <begin position="121"/>
        <end position="131"/>
    </location>
</feature>
<feature type="helix" evidence="14">
    <location>
        <begin position="134"/>
        <end position="144"/>
    </location>
</feature>
<feature type="helix" evidence="14">
    <location>
        <begin position="150"/>
        <end position="153"/>
    </location>
</feature>
<feature type="helix" evidence="14">
    <location>
        <begin position="163"/>
        <end position="181"/>
    </location>
</feature>
<feature type="strand" evidence="14">
    <location>
        <begin position="184"/>
        <end position="186"/>
    </location>
</feature>
<feature type="helix" evidence="17">
    <location>
        <begin position="189"/>
        <end position="192"/>
    </location>
</feature>
<feature type="turn" evidence="14">
    <location>
        <begin position="195"/>
        <end position="197"/>
    </location>
</feature>
<feature type="helix" evidence="14">
    <location>
        <begin position="199"/>
        <end position="214"/>
    </location>
</feature>
<feature type="helix" evidence="14">
    <location>
        <begin position="216"/>
        <end position="220"/>
    </location>
</feature>
<feature type="helix" evidence="14">
    <location>
        <begin position="221"/>
        <end position="234"/>
    </location>
</feature>
<feature type="turn" evidence="14">
    <location>
        <begin position="235"/>
        <end position="238"/>
    </location>
</feature>
<feature type="helix" evidence="14">
    <location>
        <begin position="243"/>
        <end position="261"/>
    </location>
</feature>
<feature type="helix" evidence="14">
    <location>
        <begin position="262"/>
        <end position="264"/>
    </location>
</feature>
<feature type="strand" evidence="14">
    <location>
        <begin position="267"/>
        <end position="270"/>
    </location>
</feature>
<feature type="strand" evidence="14">
    <location>
        <begin position="273"/>
        <end position="276"/>
    </location>
</feature>
<feature type="helix" evidence="14">
    <location>
        <begin position="278"/>
        <end position="303"/>
    </location>
</feature>
<feature type="helix" evidence="14">
    <location>
        <begin position="305"/>
        <end position="308"/>
    </location>
</feature>
<feature type="helix" evidence="14">
    <location>
        <begin position="312"/>
        <end position="314"/>
    </location>
</feature>
<feature type="helix" evidence="14">
    <location>
        <begin position="315"/>
        <end position="332"/>
    </location>
</feature>
<feature type="helix" evidence="17">
    <location>
        <begin position="335"/>
        <end position="341"/>
    </location>
</feature>
<feature type="helix" evidence="17">
    <location>
        <begin position="342"/>
        <end position="346"/>
    </location>
</feature>
<feature type="turn" evidence="17">
    <location>
        <begin position="354"/>
        <end position="357"/>
    </location>
</feature>
<feature type="turn" evidence="17">
    <location>
        <begin position="359"/>
        <end position="361"/>
    </location>
</feature>
<feature type="strand" evidence="15">
    <location>
        <begin position="368"/>
        <end position="370"/>
    </location>
</feature>
<feature type="helix" evidence="14">
    <location>
        <begin position="376"/>
        <end position="381"/>
    </location>
</feature>
<feature type="helix" evidence="14">
    <location>
        <begin position="384"/>
        <end position="402"/>
    </location>
</feature>
<feature type="helix" evidence="14">
    <location>
        <begin position="405"/>
        <end position="420"/>
    </location>
</feature>
<feature type="helix" evidence="14">
    <location>
        <begin position="425"/>
        <end position="430"/>
    </location>
</feature>
<feature type="helix" evidence="14">
    <location>
        <begin position="431"/>
        <end position="446"/>
    </location>
</feature>
<feature type="helix" evidence="14">
    <location>
        <begin position="447"/>
        <end position="449"/>
    </location>
</feature>
<feature type="helix" evidence="17">
    <location>
        <begin position="452"/>
        <end position="458"/>
    </location>
</feature>
<feature type="turn" evidence="14">
    <location>
        <begin position="471"/>
        <end position="473"/>
    </location>
</feature>
<feature type="helix" evidence="14">
    <location>
        <begin position="474"/>
        <end position="491"/>
    </location>
</feature>
<feature type="strand" evidence="14">
    <location>
        <begin position="492"/>
        <end position="494"/>
    </location>
</feature>
<feature type="helix" evidence="13">
    <location>
        <begin position="500"/>
        <end position="513"/>
    </location>
</feature>
<feature type="strand" evidence="15">
    <location>
        <begin position="514"/>
        <end position="516"/>
    </location>
</feature>
<feature type="helix" evidence="13">
    <location>
        <begin position="517"/>
        <end position="521"/>
    </location>
</feature>
<feature type="strand" evidence="15">
    <location>
        <begin position="524"/>
        <end position="526"/>
    </location>
</feature>
<feature type="strand" evidence="16">
    <location>
        <begin position="534"/>
        <end position="536"/>
    </location>
</feature>
<feature type="strand" evidence="14">
    <location>
        <begin position="546"/>
        <end position="548"/>
    </location>
</feature>
<feature type="helix" evidence="13">
    <location>
        <begin position="551"/>
        <end position="553"/>
    </location>
</feature>
<feature type="helix" evidence="13">
    <location>
        <begin position="554"/>
        <end position="559"/>
    </location>
</feature>
<feature type="strand" evidence="13">
    <location>
        <begin position="564"/>
        <end position="567"/>
    </location>
</feature>
<feature type="helix" evidence="13">
    <location>
        <begin position="570"/>
        <end position="574"/>
    </location>
</feature>
<feature type="turn" evidence="13">
    <location>
        <begin position="577"/>
        <end position="580"/>
    </location>
</feature>
<feature type="helix" evidence="13">
    <location>
        <begin position="584"/>
        <end position="588"/>
    </location>
</feature>
<feature type="helix" evidence="13">
    <location>
        <begin position="593"/>
        <end position="602"/>
    </location>
</feature>
<feature type="strand" evidence="13">
    <location>
        <begin position="607"/>
        <end position="611"/>
    </location>
</feature>
<feature type="helix" evidence="13">
    <location>
        <begin position="612"/>
        <end position="615"/>
    </location>
</feature>
<feature type="turn" evidence="13">
    <location>
        <begin position="616"/>
        <end position="618"/>
    </location>
</feature>
<feature type="helix" evidence="13">
    <location>
        <begin position="619"/>
        <end position="627"/>
    </location>
</feature>
<feature type="helix" evidence="13">
    <location>
        <begin position="631"/>
        <end position="636"/>
    </location>
</feature>
<feature type="strand" evidence="13">
    <location>
        <begin position="640"/>
        <end position="643"/>
    </location>
</feature>
<feature type="strand" evidence="13">
    <location>
        <begin position="649"/>
        <end position="654"/>
    </location>
</feature>
<feature type="helix" evidence="13">
    <location>
        <begin position="655"/>
        <end position="657"/>
    </location>
</feature>
<feature type="strand" evidence="15">
    <location>
        <begin position="663"/>
        <end position="670"/>
    </location>
</feature>
<feature type="helix" evidence="13">
    <location>
        <begin position="672"/>
        <end position="675"/>
    </location>
</feature>
<feature type="helix" evidence="13">
    <location>
        <begin position="678"/>
        <end position="683"/>
    </location>
</feature>
<feature type="turn" evidence="13">
    <location>
        <begin position="686"/>
        <end position="689"/>
    </location>
</feature>
<feature type="strand" evidence="13">
    <location>
        <begin position="691"/>
        <end position="698"/>
    </location>
</feature>
<feature type="helix" evidence="13">
    <location>
        <begin position="703"/>
        <end position="708"/>
    </location>
</feature>
<feature type="turn" evidence="13">
    <location>
        <begin position="709"/>
        <end position="711"/>
    </location>
</feature>
<feature type="strand" evidence="16">
    <location>
        <begin position="714"/>
        <end position="716"/>
    </location>
</feature>
<feature type="helix" evidence="13">
    <location>
        <begin position="717"/>
        <end position="732"/>
    </location>
</feature>
<feature type="turn" evidence="13">
    <location>
        <begin position="733"/>
        <end position="735"/>
    </location>
</feature>
<feature type="helix" evidence="13">
    <location>
        <begin position="740"/>
        <end position="754"/>
    </location>
</feature>
<feature type="helix" evidence="13">
    <location>
        <begin position="756"/>
        <end position="759"/>
    </location>
</feature>
<feature type="strand" evidence="13">
    <location>
        <begin position="770"/>
        <end position="776"/>
    </location>
</feature>
<feature type="strand" evidence="13">
    <location>
        <begin position="780"/>
        <end position="786"/>
    </location>
</feature>
<feature type="strand" evidence="15">
    <location>
        <begin position="787"/>
        <end position="789"/>
    </location>
</feature>
<feature type="strand" evidence="13">
    <location>
        <begin position="791"/>
        <end position="800"/>
    </location>
</feature>
<feature type="strand" evidence="13">
    <location>
        <begin position="806"/>
        <end position="814"/>
    </location>
</feature>
<feature type="strand" evidence="13">
    <location>
        <begin position="819"/>
        <end position="824"/>
    </location>
</feature>
<feature type="strand" evidence="13">
    <location>
        <begin position="833"/>
        <end position="838"/>
    </location>
</feature>
<feature type="strand" evidence="13">
    <location>
        <begin position="840"/>
        <end position="844"/>
    </location>
</feature>
<feature type="strand" evidence="13">
    <location>
        <begin position="847"/>
        <end position="851"/>
    </location>
</feature>
<feature type="helix" evidence="13">
    <location>
        <begin position="855"/>
        <end position="860"/>
    </location>
</feature>
<feature type="strand" evidence="13">
    <location>
        <begin position="863"/>
        <end position="865"/>
    </location>
</feature>
<reference key="1">
    <citation type="journal article" date="1997" name="Nature">
        <title>The complete genome sequence of the hyperthermophilic, sulphate-reducing archaeon Archaeoglobus fulgidus.</title>
        <authorList>
            <person name="Klenk H.-P."/>
            <person name="Clayton R.A."/>
            <person name="Tomb J.-F."/>
            <person name="White O."/>
            <person name="Nelson K.E."/>
            <person name="Ketchum K.A."/>
            <person name="Dodson R.J."/>
            <person name="Gwinn M.L."/>
            <person name="Hickey E.K."/>
            <person name="Peterson J.D."/>
            <person name="Richardson D.L."/>
            <person name="Kerlavage A.R."/>
            <person name="Graham D.E."/>
            <person name="Kyrpides N.C."/>
            <person name="Fleischmann R.D."/>
            <person name="Quackenbush J."/>
            <person name="Lee N.H."/>
            <person name="Sutton G.G."/>
            <person name="Gill S.R."/>
            <person name="Kirkness E.F."/>
            <person name="Dougherty B.A."/>
            <person name="McKenney K."/>
            <person name="Adams M.D."/>
            <person name="Loftus B.J."/>
            <person name="Peterson S.N."/>
            <person name="Reich C.I."/>
            <person name="McNeil L.K."/>
            <person name="Badger J.H."/>
            <person name="Glodek A."/>
            <person name="Zhou L."/>
            <person name="Overbeek R."/>
            <person name="Gocayne J.D."/>
            <person name="Weidman J.F."/>
            <person name="McDonald L.A."/>
            <person name="Utterback T.R."/>
            <person name="Cotton M.D."/>
            <person name="Spriggs T."/>
            <person name="Artiach P."/>
            <person name="Kaine B.P."/>
            <person name="Sykes S.M."/>
            <person name="Sadow P.W."/>
            <person name="D'Andrea K.P."/>
            <person name="Bowman C."/>
            <person name="Fujii C."/>
            <person name="Garland S.A."/>
            <person name="Mason T.M."/>
            <person name="Olsen G.J."/>
            <person name="Fraser C.M."/>
            <person name="Smith H.O."/>
            <person name="Woese C.R."/>
            <person name="Venter J.C."/>
        </authorList>
    </citation>
    <scope>NUCLEOTIDE SEQUENCE [LARGE SCALE GENOMIC DNA]</scope>
    <source>
        <strain>ATCC 49558 / DSM 4304 / JCM 9628 / NBRC 100126 / VC-16</strain>
    </source>
</reference>
<reference key="2">
    <citation type="journal article" date="2016" name="J. Biol. Chem.">
        <title>Comparative analysis of archaeal lipid-linked oligosaccharides that serve as oligosaccharide donors for Asn glycosylation.</title>
        <authorList>
            <person name="Taguchi Y."/>
            <person name="Fujinami D."/>
            <person name="Kohda D."/>
        </authorList>
    </citation>
    <scope>COMPOSITION OF LIPID-LINKED OLIGOSACCHARIDE</scope>
</reference>
<reference evidence="9" key="3">
    <citation type="journal article" date="2013" name="BMC Struct. Biol.">
        <title>Crystal structure of the C-terminal globular domain of the third paralog of the Archaeoglobus fulgidus oligosaccharyltransferases.</title>
        <authorList>
            <person name="Matsumoto S."/>
            <person name="Shimada A."/>
            <person name="Kohda D."/>
        </authorList>
    </citation>
    <scope>X-RAY CRYSTALLOGRAPHY (1.90 ANGSTROMS) OF 500-868</scope>
</reference>
<reference evidence="10 11" key="4">
    <citation type="journal article" date="2013" name="Proc. Natl. Acad. Sci. U.S.A.">
        <title>Crystal structures of an archaeal oligosaccharyltransferase provide insights into the catalytic cycle of N-linked protein glycosylation.</title>
        <authorList>
            <person name="Matsumoto S."/>
            <person name="Shimada A."/>
            <person name="Nyirenda J."/>
            <person name="Igura M."/>
            <person name="Kawano Y."/>
            <person name="Kohda D."/>
        </authorList>
    </citation>
    <scope>X-RAY CRYSTALLOGRAPHY (2.50 ANGSTROMS) IN COMPLEX WITH MANGANESE</scope>
    <scope>CATALYTIC ACTIVITY</scope>
    <scope>MUTAGENESIS OF ASP-47; HIS-81; ASP-161; HIS-162; HIS-163; GLU-360 AND ARG-426</scope>
</reference>
<reference evidence="12" key="5">
    <citation type="journal article" date="2017" name="Biochemistry">
        <title>Tethering an N-glycosylation sequon-containing peptide creates a catalytically competent oligosaccharyltransferase complex.</title>
        <authorList>
            <person name="Matsumoto S."/>
            <person name="Taguchi Y."/>
            <person name="Shimada A."/>
            <person name="Igura M."/>
            <person name="Kohda D."/>
        </authorList>
    </citation>
    <scope>X-RAY CRYSTALLOGRAPHY (3.50 ANGSTROMS) IN COMPLEX WITH MAGNESIUM AND ACCEPTOR PEPTIDE</scope>
    <scope>CATALYTIC ACTIVITY</scope>
</reference>
<keyword id="KW-0002">3D-structure</keyword>
<keyword id="KW-1003">Cell membrane</keyword>
<keyword id="KW-0328">Glycosyltransferase</keyword>
<keyword id="KW-0460">Magnesium</keyword>
<keyword id="KW-0464">Manganese</keyword>
<keyword id="KW-0472">Membrane</keyword>
<keyword id="KW-0479">Metal-binding</keyword>
<keyword id="KW-1185">Reference proteome</keyword>
<keyword id="KW-0808">Transferase</keyword>
<keyword id="KW-0812">Transmembrane</keyword>
<keyword id="KW-1133">Transmembrane helix</keyword>
<accession>O29867</accession>